<accession>Q5EAX9</accession>
<reference key="1">
    <citation type="submission" date="2005-02" db="EMBL/GenBank/DDBJ databases">
        <authorList>
            <consortium name="NIH - Xenopus Gene Collection (XGC) project"/>
        </authorList>
    </citation>
    <scope>NUCLEOTIDE SEQUENCE [LARGE SCALE MRNA]</scope>
    <source>
        <tissue>Egg</tissue>
    </source>
</reference>
<gene>
    <name type="primary">tmem120b-a</name>
</gene>
<proteinExistence type="evidence at transcript level"/>
<feature type="chain" id="PRO_0000309532" description="Transmembrane protein 120B-A">
    <location>
        <begin position="1"/>
        <end position="335"/>
    </location>
</feature>
<feature type="transmembrane region" description="Helical" evidence="2">
    <location>
        <begin position="100"/>
        <end position="122"/>
    </location>
</feature>
<feature type="transmembrane region" description="Helical" evidence="2">
    <location>
        <begin position="130"/>
        <end position="150"/>
    </location>
</feature>
<feature type="transmembrane region" description="Helical" evidence="2">
    <location>
        <begin position="157"/>
        <end position="177"/>
    </location>
</feature>
<feature type="transmembrane region" description="Helical" evidence="2">
    <location>
        <begin position="193"/>
        <end position="213"/>
    </location>
</feature>
<feature type="transmembrane region" description="Helical" evidence="2">
    <location>
        <begin position="268"/>
        <end position="288"/>
    </location>
</feature>
<feature type="transmembrane region" description="Helical" evidence="2">
    <location>
        <begin position="300"/>
        <end position="320"/>
    </location>
</feature>
<feature type="coiled-coil region" evidence="2">
    <location>
        <begin position="1"/>
        <end position="40"/>
    </location>
</feature>
<sequence length="335" mass="39812">MSLQKCQEEWSEIEKEFQQLQETHKVYKQKLEELNSLQNLCSSCINKHKRRLTEFKGNLHGLKRTSNLEEKELVQQIDGTIKERRNAFFDMEAYLPKKNGLYLNLVLGNVNVTLLSTQAKFAYKDEYEKFKLYLTIILLLGAITCRFVLNYRVTDEVFNFLLVWYYCTLTIRESILISNGSRIKGWWVSHHYVSTFLSGVMLTWPDGLMYQIFRNQFLAFSIFQSCVQFLQYYYQSGCLYRLRALGERNHLDLTVEGFQSWMWRGLTFLLPFLFFGHFWQLYNAITLFGLSRHDACKEWQVFVLALTFLLLFLGNFLTTLKVVHTKFQKNKLKKP</sequence>
<name>T12BA_XENLA</name>
<keyword id="KW-0175">Coiled coil</keyword>
<keyword id="KW-0472">Membrane</keyword>
<keyword id="KW-0539">Nucleus</keyword>
<keyword id="KW-1185">Reference proteome</keyword>
<keyword id="KW-0812">Transmembrane</keyword>
<keyword id="KW-1133">Transmembrane helix</keyword>
<protein>
    <recommendedName>
        <fullName>Transmembrane protein 120B-A</fullName>
    </recommendedName>
</protein>
<evidence type="ECO:0000250" key="1">
    <source>
        <dbReference type="UniProtKB" id="Q3TA38"/>
    </source>
</evidence>
<evidence type="ECO:0000255" key="2"/>
<evidence type="ECO:0000305" key="3"/>
<dbReference type="EMBL" id="BC090205">
    <property type="protein sequence ID" value="AAH90205.1"/>
    <property type="molecule type" value="mRNA"/>
</dbReference>
<dbReference type="RefSeq" id="NP_001089276.1">
    <property type="nucleotide sequence ID" value="NM_001095807.1"/>
</dbReference>
<dbReference type="SMR" id="Q5EAX9"/>
<dbReference type="DNASU" id="734324"/>
<dbReference type="GeneID" id="734324"/>
<dbReference type="KEGG" id="xla:734324"/>
<dbReference type="AGR" id="Xenbase:XB-GENE-6087423"/>
<dbReference type="CTD" id="734324"/>
<dbReference type="Xenbase" id="XB-GENE-6087423">
    <property type="gene designation" value="tmem120b.L"/>
</dbReference>
<dbReference type="OMA" id="WPNTGPW"/>
<dbReference type="OrthoDB" id="2015098at2759"/>
<dbReference type="Proteomes" id="UP000186698">
    <property type="component" value="Chromosome 1L"/>
</dbReference>
<dbReference type="Bgee" id="734324">
    <property type="expression patterns" value="Expressed in muscle tissue and 19 other cell types or tissues"/>
</dbReference>
<dbReference type="GO" id="GO:0005637">
    <property type="term" value="C:nuclear inner membrane"/>
    <property type="evidence" value="ECO:0000318"/>
    <property type="project" value="GO_Central"/>
</dbReference>
<dbReference type="GO" id="GO:0045444">
    <property type="term" value="P:fat cell differentiation"/>
    <property type="evidence" value="ECO:0000318"/>
    <property type="project" value="GO_Central"/>
</dbReference>
<dbReference type="InterPro" id="IPR012926">
    <property type="entry name" value="TMEM120A/B"/>
</dbReference>
<dbReference type="PANTHER" id="PTHR21433:SF2">
    <property type="entry name" value="TRANSMEMBRANE PROTEIN 120B"/>
    <property type="match status" value="1"/>
</dbReference>
<dbReference type="PANTHER" id="PTHR21433">
    <property type="entry name" value="TRANSMEMBRANE PROTEIN INDUCED BY TUMOR NECROSIS FACTOR ALPHA"/>
    <property type="match status" value="1"/>
</dbReference>
<dbReference type="Pfam" id="PF07851">
    <property type="entry name" value="TMEM120A-B"/>
    <property type="match status" value="1"/>
</dbReference>
<organism>
    <name type="scientific">Xenopus laevis</name>
    <name type="common">African clawed frog</name>
    <dbReference type="NCBI Taxonomy" id="8355"/>
    <lineage>
        <taxon>Eukaryota</taxon>
        <taxon>Metazoa</taxon>
        <taxon>Chordata</taxon>
        <taxon>Craniata</taxon>
        <taxon>Vertebrata</taxon>
        <taxon>Euteleostomi</taxon>
        <taxon>Amphibia</taxon>
        <taxon>Batrachia</taxon>
        <taxon>Anura</taxon>
        <taxon>Pipoidea</taxon>
        <taxon>Pipidae</taxon>
        <taxon>Xenopodinae</taxon>
        <taxon>Xenopus</taxon>
        <taxon>Xenopus</taxon>
    </lineage>
</organism>
<comment type="function">
    <text evidence="1">Necessary for efficient adipogenesis. Does not show ion channel activity.</text>
</comment>
<comment type="subcellular location">
    <subcellularLocation>
        <location evidence="1">Nucleus inner membrane</location>
        <topology evidence="2">Multi-pass membrane protein</topology>
    </subcellularLocation>
</comment>
<comment type="similarity">
    <text evidence="3">Belongs to the TMEM120 family.</text>
</comment>